<organism>
    <name type="scientific">Drosophila ananassae</name>
    <name type="common">Fruit fly</name>
    <dbReference type="NCBI Taxonomy" id="7217"/>
    <lineage>
        <taxon>Eukaryota</taxon>
        <taxon>Metazoa</taxon>
        <taxon>Ecdysozoa</taxon>
        <taxon>Arthropoda</taxon>
        <taxon>Hexapoda</taxon>
        <taxon>Insecta</taxon>
        <taxon>Pterygota</taxon>
        <taxon>Neoptera</taxon>
        <taxon>Endopterygota</taxon>
        <taxon>Diptera</taxon>
        <taxon>Brachycera</taxon>
        <taxon>Muscomorpha</taxon>
        <taxon>Ephydroidea</taxon>
        <taxon>Drosophilidae</taxon>
        <taxon>Drosophila</taxon>
        <taxon>Sophophora</taxon>
    </lineage>
</organism>
<name>PURA_DROAN</name>
<evidence type="ECO:0000250" key="1"/>
<evidence type="ECO:0000255" key="2">
    <source>
        <dbReference type="HAMAP-Rule" id="MF_03125"/>
    </source>
</evidence>
<feature type="chain" id="PRO_0000399258" description="Adenylosuccinate synthetase">
    <location>
        <begin position="1"/>
        <end position="448"/>
    </location>
</feature>
<feature type="active site" description="Proton acceptor" evidence="2">
    <location>
        <position position="37"/>
    </location>
</feature>
<feature type="active site" description="Proton donor" evidence="2">
    <location>
        <position position="65"/>
    </location>
</feature>
<feature type="binding site" evidence="2">
    <location>
        <begin position="36"/>
        <end position="42"/>
    </location>
    <ligand>
        <name>GTP</name>
        <dbReference type="ChEBI" id="CHEBI:37565"/>
    </ligand>
</feature>
<feature type="binding site" description="in other chain" evidence="2">
    <location>
        <begin position="37"/>
        <end position="40"/>
    </location>
    <ligand>
        <name>IMP</name>
        <dbReference type="ChEBI" id="CHEBI:58053"/>
        <note>ligand shared between dimeric partners</note>
    </ligand>
</feature>
<feature type="binding site" evidence="2">
    <location>
        <position position="37"/>
    </location>
    <ligand>
        <name>Mg(2+)</name>
        <dbReference type="ChEBI" id="CHEBI:18420"/>
    </ligand>
</feature>
<feature type="binding site" description="in other chain" evidence="2">
    <location>
        <begin position="62"/>
        <end position="65"/>
    </location>
    <ligand>
        <name>IMP</name>
        <dbReference type="ChEBI" id="CHEBI:58053"/>
        <note>ligand shared between dimeric partners</note>
    </ligand>
</feature>
<feature type="binding site" evidence="2">
    <location>
        <begin position="64"/>
        <end position="66"/>
    </location>
    <ligand>
        <name>GTP</name>
        <dbReference type="ChEBI" id="CHEBI:37565"/>
    </ligand>
</feature>
<feature type="binding site" evidence="2">
    <location>
        <position position="64"/>
    </location>
    <ligand>
        <name>Mg(2+)</name>
        <dbReference type="ChEBI" id="CHEBI:18420"/>
    </ligand>
</feature>
<feature type="binding site" description="in other chain" evidence="2">
    <location>
        <position position="154"/>
    </location>
    <ligand>
        <name>IMP</name>
        <dbReference type="ChEBI" id="CHEBI:58053"/>
        <note>ligand shared between dimeric partners</note>
    </ligand>
</feature>
<feature type="binding site" evidence="2">
    <location>
        <position position="168"/>
    </location>
    <ligand>
        <name>IMP</name>
        <dbReference type="ChEBI" id="CHEBI:58053"/>
        <note>ligand shared between dimeric partners</note>
    </ligand>
</feature>
<feature type="binding site" description="in other chain" evidence="2">
    <location>
        <position position="246"/>
    </location>
    <ligand>
        <name>IMP</name>
        <dbReference type="ChEBI" id="CHEBI:58053"/>
        <note>ligand shared between dimeric partners</note>
    </ligand>
</feature>
<feature type="binding site" description="in other chain" evidence="2">
    <location>
        <position position="261"/>
    </location>
    <ligand>
        <name>IMP</name>
        <dbReference type="ChEBI" id="CHEBI:58053"/>
        <note>ligand shared between dimeric partners</note>
    </ligand>
</feature>
<feature type="binding site" evidence="2">
    <location>
        <begin position="321"/>
        <end position="327"/>
    </location>
    <ligand>
        <name>substrate</name>
    </ligand>
</feature>
<feature type="binding site" description="in other chain" evidence="2">
    <location>
        <position position="325"/>
    </location>
    <ligand>
        <name>IMP</name>
        <dbReference type="ChEBI" id="CHEBI:58053"/>
        <note>ligand shared between dimeric partners</note>
    </ligand>
</feature>
<feature type="binding site" evidence="2">
    <location>
        <position position="327"/>
    </location>
    <ligand>
        <name>GTP</name>
        <dbReference type="ChEBI" id="CHEBI:37565"/>
    </ligand>
</feature>
<feature type="binding site" evidence="2">
    <location>
        <begin position="353"/>
        <end position="355"/>
    </location>
    <ligand>
        <name>GTP</name>
        <dbReference type="ChEBI" id="CHEBI:37565"/>
    </ligand>
</feature>
<feature type="binding site" evidence="2">
    <location>
        <begin position="436"/>
        <end position="438"/>
    </location>
    <ligand>
        <name>GTP</name>
        <dbReference type="ChEBI" id="CHEBI:37565"/>
    </ligand>
</feature>
<dbReference type="EC" id="6.3.4.4" evidence="2"/>
<dbReference type="EMBL" id="CH902617">
    <property type="protein sequence ID" value="EDV42443.1"/>
    <property type="molecule type" value="Genomic_DNA"/>
</dbReference>
<dbReference type="SMR" id="B3M343"/>
<dbReference type="FunCoup" id="B3M343">
    <property type="interactions" value="1475"/>
</dbReference>
<dbReference type="STRING" id="7217.B3M343"/>
<dbReference type="EnsemblMetazoa" id="FBtr0121712">
    <property type="protein sequence ID" value="FBpp0120204"/>
    <property type="gene ID" value="FBgn0094031"/>
</dbReference>
<dbReference type="EnsemblMetazoa" id="XM_001953846.4">
    <property type="protein sequence ID" value="XP_001953882.1"/>
    <property type="gene ID" value="LOC6499801"/>
</dbReference>
<dbReference type="GeneID" id="6499801"/>
<dbReference type="KEGG" id="dan:6499801"/>
<dbReference type="eggNOG" id="KOG1355">
    <property type="taxonomic scope" value="Eukaryota"/>
</dbReference>
<dbReference type="HOGENOM" id="CLU_029848_3_0_1"/>
<dbReference type="InParanoid" id="B3M343"/>
<dbReference type="OMA" id="QSYVRFL"/>
<dbReference type="OrthoDB" id="10265645at2759"/>
<dbReference type="PhylomeDB" id="B3M343"/>
<dbReference type="UniPathway" id="UPA00075">
    <property type="reaction ID" value="UER00335"/>
</dbReference>
<dbReference type="Proteomes" id="UP000007801">
    <property type="component" value="Unassembled WGS sequence"/>
</dbReference>
<dbReference type="GO" id="GO:0005737">
    <property type="term" value="C:cytoplasm"/>
    <property type="evidence" value="ECO:0007669"/>
    <property type="project" value="UniProtKB-SubCell"/>
</dbReference>
<dbReference type="GO" id="GO:0004019">
    <property type="term" value="F:adenylosuccinate synthase activity"/>
    <property type="evidence" value="ECO:0007669"/>
    <property type="project" value="UniProtKB-UniRule"/>
</dbReference>
<dbReference type="GO" id="GO:0005525">
    <property type="term" value="F:GTP binding"/>
    <property type="evidence" value="ECO:0007669"/>
    <property type="project" value="UniProtKB-UniRule"/>
</dbReference>
<dbReference type="GO" id="GO:0000287">
    <property type="term" value="F:magnesium ion binding"/>
    <property type="evidence" value="ECO:0007669"/>
    <property type="project" value="UniProtKB-UniRule"/>
</dbReference>
<dbReference type="GO" id="GO:0044208">
    <property type="term" value="P:'de novo' AMP biosynthetic process"/>
    <property type="evidence" value="ECO:0007669"/>
    <property type="project" value="UniProtKB-UniRule"/>
</dbReference>
<dbReference type="GO" id="GO:0046040">
    <property type="term" value="P:IMP metabolic process"/>
    <property type="evidence" value="ECO:0007669"/>
    <property type="project" value="TreeGrafter"/>
</dbReference>
<dbReference type="CDD" id="cd03108">
    <property type="entry name" value="AdSS"/>
    <property type="match status" value="1"/>
</dbReference>
<dbReference type="FunFam" id="3.90.170.10:FF:000001">
    <property type="entry name" value="Adenylosuccinate synthetase"/>
    <property type="match status" value="1"/>
</dbReference>
<dbReference type="FunFam" id="1.10.300.10:FF:000002">
    <property type="entry name" value="Adenylosuccinate synthetase, chloroplastic"/>
    <property type="match status" value="1"/>
</dbReference>
<dbReference type="Gene3D" id="3.40.440.10">
    <property type="entry name" value="Adenylosuccinate Synthetase, subunit A, domain 1"/>
    <property type="match status" value="1"/>
</dbReference>
<dbReference type="Gene3D" id="1.10.300.10">
    <property type="entry name" value="Adenylosuccinate Synthetase, subunit A, domain 2"/>
    <property type="match status" value="1"/>
</dbReference>
<dbReference type="Gene3D" id="3.90.170.10">
    <property type="entry name" value="Adenylosuccinate Synthetase, subunit A, domain 3"/>
    <property type="match status" value="1"/>
</dbReference>
<dbReference type="HAMAP" id="MF_00011">
    <property type="entry name" value="Adenylosucc_synth"/>
    <property type="match status" value="1"/>
</dbReference>
<dbReference type="InterPro" id="IPR018220">
    <property type="entry name" value="Adenylosuccin_syn_GTP-bd"/>
</dbReference>
<dbReference type="InterPro" id="IPR033128">
    <property type="entry name" value="Adenylosuccin_syn_Lys_AS"/>
</dbReference>
<dbReference type="InterPro" id="IPR042109">
    <property type="entry name" value="Adenylosuccinate_synth_dom1"/>
</dbReference>
<dbReference type="InterPro" id="IPR042110">
    <property type="entry name" value="Adenylosuccinate_synth_dom2"/>
</dbReference>
<dbReference type="InterPro" id="IPR042111">
    <property type="entry name" value="Adenylosuccinate_synth_dom3"/>
</dbReference>
<dbReference type="InterPro" id="IPR001114">
    <property type="entry name" value="Adenylosuccinate_synthetase"/>
</dbReference>
<dbReference type="InterPro" id="IPR027417">
    <property type="entry name" value="P-loop_NTPase"/>
</dbReference>
<dbReference type="NCBIfam" id="NF002223">
    <property type="entry name" value="PRK01117.1"/>
    <property type="match status" value="1"/>
</dbReference>
<dbReference type="NCBIfam" id="TIGR00184">
    <property type="entry name" value="purA"/>
    <property type="match status" value="1"/>
</dbReference>
<dbReference type="PANTHER" id="PTHR11846">
    <property type="entry name" value="ADENYLOSUCCINATE SYNTHETASE"/>
    <property type="match status" value="1"/>
</dbReference>
<dbReference type="PANTHER" id="PTHR11846:SF0">
    <property type="entry name" value="ADENYLOSUCCINATE SYNTHETASE"/>
    <property type="match status" value="1"/>
</dbReference>
<dbReference type="Pfam" id="PF00709">
    <property type="entry name" value="Adenylsucc_synt"/>
    <property type="match status" value="1"/>
</dbReference>
<dbReference type="SMART" id="SM00788">
    <property type="entry name" value="Adenylsucc_synt"/>
    <property type="match status" value="1"/>
</dbReference>
<dbReference type="SUPFAM" id="SSF52540">
    <property type="entry name" value="P-loop containing nucleoside triphosphate hydrolases"/>
    <property type="match status" value="1"/>
</dbReference>
<dbReference type="PROSITE" id="PS01266">
    <property type="entry name" value="ADENYLOSUCCIN_SYN_1"/>
    <property type="match status" value="1"/>
</dbReference>
<dbReference type="PROSITE" id="PS00513">
    <property type="entry name" value="ADENYLOSUCCIN_SYN_2"/>
    <property type="match status" value="1"/>
</dbReference>
<reference key="1">
    <citation type="journal article" date="2007" name="Nature">
        <title>Evolution of genes and genomes on the Drosophila phylogeny.</title>
        <authorList>
            <consortium name="Drosophila 12 genomes consortium"/>
        </authorList>
    </citation>
    <scope>NUCLEOTIDE SEQUENCE [LARGE SCALE GENOMIC DNA]</scope>
    <source>
        <strain>Tucson 14024-0371.13</strain>
    </source>
</reference>
<keyword id="KW-0963">Cytoplasm</keyword>
<keyword id="KW-0342">GTP-binding</keyword>
<keyword id="KW-0436">Ligase</keyword>
<keyword id="KW-0460">Magnesium</keyword>
<keyword id="KW-0479">Metal-binding</keyword>
<keyword id="KW-0547">Nucleotide-binding</keyword>
<keyword id="KW-0658">Purine biosynthesis</keyword>
<keyword id="KW-1185">Reference proteome</keyword>
<accession>B3M343</accession>
<comment type="function">
    <text evidence="1">Plays an important role in the de novo pathway and in the salvage pathway of purine nucleotide biosynthesis. Catalyzes the first committed step in the biosynthesis of AMP from IMP (By similarity).</text>
</comment>
<comment type="catalytic activity">
    <reaction evidence="2">
        <text>IMP + L-aspartate + GTP = N(6)-(1,2-dicarboxyethyl)-AMP + GDP + phosphate + 2 H(+)</text>
        <dbReference type="Rhea" id="RHEA:15753"/>
        <dbReference type="ChEBI" id="CHEBI:15378"/>
        <dbReference type="ChEBI" id="CHEBI:29991"/>
        <dbReference type="ChEBI" id="CHEBI:37565"/>
        <dbReference type="ChEBI" id="CHEBI:43474"/>
        <dbReference type="ChEBI" id="CHEBI:57567"/>
        <dbReference type="ChEBI" id="CHEBI:58053"/>
        <dbReference type="ChEBI" id="CHEBI:58189"/>
        <dbReference type="EC" id="6.3.4.4"/>
    </reaction>
</comment>
<comment type="cofactor">
    <cofactor evidence="2">
        <name>Mg(2+)</name>
        <dbReference type="ChEBI" id="CHEBI:18420"/>
    </cofactor>
    <text evidence="2">Binds 1 Mg(2+) ion per subunit.</text>
</comment>
<comment type="pathway">
    <text evidence="2">Purine metabolism; AMP biosynthesis via de novo pathway; AMP from IMP: step 1/2.</text>
</comment>
<comment type="subunit">
    <text evidence="2">Homodimer.</text>
</comment>
<comment type="subcellular location">
    <subcellularLocation>
        <location evidence="2">Cytoplasm</location>
    </subcellularLocation>
</comment>
<comment type="similarity">
    <text evidence="2">Belongs to the adenylosuccinate synthetase family.</text>
</comment>
<proteinExistence type="inferred from homology"/>
<protein>
    <recommendedName>
        <fullName evidence="2">Adenylosuccinate synthetase</fullName>
        <shortName evidence="2">AMPSase</shortName>
        <shortName evidence="2">AdSS</shortName>
        <ecNumber evidence="2">6.3.4.4</ecNumber>
    </recommendedName>
    <alternativeName>
        <fullName evidence="2">IMP--aspartate ligase</fullName>
    </alternativeName>
</protein>
<sequence length="448" mass="49081">MSESSAINGNHYEQLHQGRTKMYKSKVAVVLGAQWGDEGKGKVVDMLASDVDIVCRCQGGNNAGHTVVANGTEFDFHLLPSGVVNEKCVSVIGNGVVIHLPSLFDEVLKNEAKGLQHLENRLIISDRAHLVFDFHQHVDGMQEAEKGGKSLGTTKKGIGPAYSSKATRNGIRVGELLGDFNLFSDKFKSIVATHVRLFPSINVDVEAELARYKDYAEKVRPYVKDTICFLHTALRNGKTILVEGANAAMLDIDFGTYPYVTSSNCSIGGVLTGLGLPPQTIGEVIGVVKAYTTRVGDGPFPTEQLNDIGDLLQTRGFEIGVTTKRKRRCGWLDIPLLKYTSLVNGYTCICITKLDILDTLPEIKVAVAYKKPNGEKLDHFPGTIAELGAIEVEYAVLPGWQTSTEHIRNFKELPENAQNYVRFLESELSVPVRWVGVGKGRESIINVH</sequence>
<gene>
    <name type="ORF">GF17012</name>
</gene>